<organism>
    <name type="scientific">Mus musculus</name>
    <name type="common">Mouse</name>
    <dbReference type="NCBI Taxonomy" id="10090"/>
    <lineage>
        <taxon>Eukaryota</taxon>
        <taxon>Metazoa</taxon>
        <taxon>Chordata</taxon>
        <taxon>Craniata</taxon>
        <taxon>Vertebrata</taxon>
        <taxon>Euteleostomi</taxon>
        <taxon>Mammalia</taxon>
        <taxon>Eutheria</taxon>
        <taxon>Euarchontoglires</taxon>
        <taxon>Glires</taxon>
        <taxon>Rodentia</taxon>
        <taxon>Myomorpha</taxon>
        <taxon>Muroidea</taxon>
        <taxon>Muridae</taxon>
        <taxon>Murinae</taxon>
        <taxon>Mus</taxon>
        <taxon>Mus</taxon>
    </lineage>
</organism>
<name>C2CD5_MOUSE</name>
<evidence type="ECO:0000250" key="1"/>
<evidence type="ECO:0000250" key="2">
    <source>
        <dbReference type="UniProtKB" id="Q86YS7"/>
    </source>
</evidence>
<evidence type="ECO:0000255" key="3">
    <source>
        <dbReference type="PROSITE-ProRule" id="PRU00041"/>
    </source>
</evidence>
<evidence type="ECO:0000256" key="4">
    <source>
        <dbReference type="SAM" id="MobiDB-lite"/>
    </source>
</evidence>
<evidence type="ECO:0000269" key="5">
    <source>
    </source>
</evidence>
<evidence type="ECO:0000303" key="6">
    <source>
    </source>
</evidence>
<evidence type="ECO:0000303" key="7">
    <source>
    </source>
</evidence>
<evidence type="ECO:0000303" key="8">
    <source>
    </source>
</evidence>
<evidence type="ECO:0000305" key="9"/>
<evidence type="ECO:0007744" key="10">
    <source>
    </source>
</evidence>
<sequence length="1016" mass="111664">MPGKLKVKIVAGRHLPVMDRASDLTDAFVEVKFGNTTFKTDVYLKSLNPQWNSEWFKFEVDDEDLQDEPLQITVLDHDTYSANDAIGKVYIDIDPLLYSEAATVISGWFPIYDTIHGIRGEINVVVKVDLFNDSNRFRQSSCGVKFFCTTSIPKCYRAVVIHGFVEELVVNEDPEYQWIDRIRTPRASNEARQRLISLMSGELQRKIGLKVLEMRGNAVVGYLQCFDLEGESGLVVRAIGTACTLDKLSSPAAFLPACSSPSRELKEIPFNEDPNPNTHSSGPSTPLKNQTYSFSPSKSYSRQSSSSDTDLSLTPKTGMGSGSAGKEGGPFKALLRQQTQSALEQREFPFLTLTAFPPGLLVHVGGVVSARSVKLLDRIHNPDEPETRDAWWAEIRQEIKSHAKALGCHAVVGYSESTSICEEVCILSASGTAAVLNPRFLQEGTVEGCLEQRIEENLPVGCGFCHIPYDELNMPFPAHLTYCYNCRKQKVPDVLFTTIDLPTDAVVVGKGCLIQARLCRLKKKAQAEANATAISNLLPFMEYEVHTQLMNKLKLKGMNALFGLRIQITVGETMLMGLASATGVYLAALPTPGGIQIAGKTPNDGSYEQHISHMQKRINDTIAKNKELYEITPPEVSEEMIGSPIPEPRQRSRLLRSQSESSDEVTELDLSHGKKDAFVLEIDDTDAMEDVHSLLTDAPPPSGFYSCNTEIMPGINNWTSEIQMFTSVRVVRLSSLNLTNQALNKNFNGLCENLLKSLYFKLRSMTPCCLCHVNFTVSLPEDELIQVTVTAVAITFDKNQALQTTKPHVEKSLQRASTDNEELLQFPLELCSDSLPPHPFPAAKEHLESANSNSGIPAAQRAVTVEKASAMGDGNFRNRSAPPCASPTVGVVKMTPLSFIPGAKITKYLGIINMFFIRETTSLREEGGVSGFLHAFIAEVFAMVRAHVAALGGNAVVSYIMKQCVFMENPSKNQAQCLINVSGDAVVFVRDSDLEVMSSQQPAANCQPSCTGEVTT</sequence>
<proteinExistence type="evidence at protein level"/>
<reference key="1">
    <citation type="journal article" date="2004" name="DNA Res.">
        <title>Prediction of the coding sequences of mouse homologues of KIAA gene: IV. The complete nucleotide sequences of 500 mouse KIAA-homologous cDNAs identified by screening of terminal sequences of cDNA clones randomly sampled from size-fractionated libraries.</title>
        <authorList>
            <person name="Okazaki N."/>
            <person name="Kikuno R."/>
            <person name="Ohara R."/>
            <person name="Inamoto S."/>
            <person name="Koseki H."/>
            <person name="Hiraoka S."/>
            <person name="Saga Y."/>
            <person name="Seino S."/>
            <person name="Nishimura M."/>
            <person name="Kaisho T."/>
            <person name="Hoshino K."/>
            <person name="Kitamura H."/>
            <person name="Nagase T."/>
            <person name="Ohara O."/>
            <person name="Koga H."/>
        </authorList>
    </citation>
    <scope>NUCLEOTIDE SEQUENCE [LARGE SCALE MRNA] (ISOFORM 2)</scope>
    <source>
        <tissue>Fetal brain</tissue>
    </source>
</reference>
<reference key="2">
    <citation type="journal article" date="2005" name="Science">
        <title>The transcriptional landscape of the mammalian genome.</title>
        <authorList>
            <person name="Carninci P."/>
            <person name="Kasukawa T."/>
            <person name="Katayama S."/>
            <person name="Gough J."/>
            <person name="Frith M.C."/>
            <person name="Maeda N."/>
            <person name="Oyama R."/>
            <person name="Ravasi T."/>
            <person name="Lenhard B."/>
            <person name="Wells C."/>
            <person name="Kodzius R."/>
            <person name="Shimokawa K."/>
            <person name="Bajic V.B."/>
            <person name="Brenner S.E."/>
            <person name="Batalov S."/>
            <person name="Forrest A.R."/>
            <person name="Zavolan M."/>
            <person name="Davis M.J."/>
            <person name="Wilming L.G."/>
            <person name="Aidinis V."/>
            <person name="Allen J.E."/>
            <person name="Ambesi-Impiombato A."/>
            <person name="Apweiler R."/>
            <person name="Aturaliya R.N."/>
            <person name="Bailey T.L."/>
            <person name="Bansal M."/>
            <person name="Baxter L."/>
            <person name="Beisel K.W."/>
            <person name="Bersano T."/>
            <person name="Bono H."/>
            <person name="Chalk A.M."/>
            <person name="Chiu K.P."/>
            <person name="Choudhary V."/>
            <person name="Christoffels A."/>
            <person name="Clutterbuck D.R."/>
            <person name="Crowe M.L."/>
            <person name="Dalla E."/>
            <person name="Dalrymple B.P."/>
            <person name="de Bono B."/>
            <person name="Della Gatta G."/>
            <person name="di Bernardo D."/>
            <person name="Down T."/>
            <person name="Engstrom P."/>
            <person name="Fagiolini M."/>
            <person name="Faulkner G."/>
            <person name="Fletcher C.F."/>
            <person name="Fukushima T."/>
            <person name="Furuno M."/>
            <person name="Futaki S."/>
            <person name="Gariboldi M."/>
            <person name="Georgii-Hemming P."/>
            <person name="Gingeras T.R."/>
            <person name="Gojobori T."/>
            <person name="Green R.E."/>
            <person name="Gustincich S."/>
            <person name="Harbers M."/>
            <person name="Hayashi Y."/>
            <person name="Hensch T.K."/>
            <person name="Hirokawa N."/>
            <person name="Hill D."/>
            <person name="Huminiecki L."/>
            <person name="Iacono M."/>
            <person name="Ikeo K."/>
            <person name="Iwama A."/>
            <person name="Ishikawa T."/>
            <person name="Jakt M."/>
            <person name="Kanapin A."/>
            <person name="Katoh M."/>
            <person name="Kawasawa Y."/>
            <person name="Kelso J."/>
            <person name="Kitamura H."/>
            <person name="Kitano H."/>
            <person name="Kollias G."/>
            <person name="Krishnan S.P."/>
            <person name="Kruger A."/>
            <person name="Kummerfeld S.K."/>
            <person name="Kurochkin I.V."/>
            <person name="Lareau L.F."/>
            <person name="Lazarevic D."/>
            <person name="Lipovich L."/>
            <person name="Liu J."/>
            <person name="Liuni S."/>
            <person name="McWilliam S."/>
            <person name="Madan Babu M."/>
            <person name="Madera M."/>
            <person name="Marchionni L."/>
            <person name="Matsuda H."/>
            <person name="Matsuzawa S."/>
            <person name="Miki H."/>
            <person name="Mignone F."/>
            <person name="Miyake S."/>
            <person name="Morris K."/>
            <person name="Mottagui-Tabar S."/>
            <person name="Mulder N."/>
            <person name="Nakano N."/>
            <person name="Nakauchi H."/>
            <person name="Ng P."/>
            <person name="Nilsson R."/>
            <person name="Nishiguchi S."/>
            <person name="Nishikawa S."/>
            <person name="Nori F."/>
            <person name="Ohara O."/>
            <person name="Okazaki Y."/>
            <person name="Orlando V."/>
            <person name="Pang K.C."/>
            <person name="Pavan W.J."/>
            <person name="Pavesi G."/>
            <person name="Pesole G."/>
            <person name="Petrovsky N."/>
            <person name="Piazza S."/>
            <person name="Reed J."/>
            <person name="Reid J.F."/>
            <person name="Ring B.Z."/>
            <person name="Ringwald M."/>
            <person name="Rost B."/>
            <person name="Ruan Y."/>
            <person name="Salzberg S.L."/>
            <person name="Sandelin A."/>
            <person name="Schneider C."/>
            <person name="Schoenbach C."/>
            <person name="Sekiguchi K."/>
            <person name="Semple C.A."/>
            <person name="Seno S."/>
            <person name="Sessa L."/>
            <person name="Sheng Y."/>
            <person name="Shibata Y."/>
            <person name="Shimada H."/>
            <person name="Shimada K."/>
            <person name="Silva D."/>
            <person name="Sinclair B."/>
            <person name="Sperling S."/>
            <person name="Stupka E."/>
            <person name="Sugiura K."/>
            <person name="Sultana R."/>
            <person name="Takenaka Y."/>
            <person name="Taki K."/>
            <person name="Tammoja K."/>
            <person name="Tan S.L."/>
            <person name="Tang S."/>
            <person name="Taylor M.S."/>
            <person name="Tegner J."/>
            <person name="Teichmann S.A."/>
            <person name="Ueda H.R."/>
            <person name="van Nimwegen E."/>
            <person name="Verardo R."/>
            <person name="Wei C.L."/>
            <person name="Yagi K."/>
            <person name="Yamanishi H."/>
            <person name="Zabarovsky E."/>
            <person name="Zhu S."/>
            <person name="Zimmer A."/>
            <person name="Hide W."/>
            <person name="Bult C."/>
            <person name="Grimmond S.M."/>
            <person name="Teasdale R.D."/>
            <person name="Liu E.T."/>
            <person name="Brusic V."/>
            <person name="Quackenbush J."/>
            <person name="Wahlestedt C."/>
            <person name="Mattick J.S."/>
            <person name="Hume D.A."/>
            <person name="Kai C."/>
            <person name="Sasaki D."/>
            <person name="Tomaru Y."/>
            <person name="Fukuda S."/>
            <person name="Kanamori-Katayama M."/>
            <person name="Suzuki M."/>
            <person name="Aoki J."/>
            <person name="Arakawa T."/>
            <person name="Iida J."/>
            <person name="Imamura K."/>
            <person name="Itoh M."/>
            <person name="Kato T."/>
            <person name="Kawaji H."/>
            <person name="Kawagashira N."/>
            <person name="Kawashima T."/>
            <person name="Kojima M."/>
            <person name="Kondo S."/>
            <person name="Konno H."/>
            <person name="Nakano K."/>
            <person name="Ninomiya N."/>
            <person name="Nishio T."/>
            <person name="Okada M."/>
            <person name="Plessy C."/>
            <person name="Shibata K."/>
            <person name="Shiraki T."/>
            <person name="Suzuki S."/>
            <person name="Tagami M."/>
            <person name="Waki K."/>
            <person name="Watahiki A."/>
            <person name="Okamura-Oho Y."/>
            <person name="Suzuki H."/>
            <person name="Kawai J."/>
            <person name="Hayashizaki Y."/>
        </authorList>
    </citation>
    <scope>NUCLEOTIDE SEQUENCE [LARGE SCALE MRNA] (ISOFORM 1)</scope>
    <scope>NUCLEOTIDE SEQUENCE [LARGE SCALE MRNA] OF 710-1016 (ISOFORM 2)</scope>
    <source>
        <strain>C57BL/6J</strain>
        <tissue>Egg</tissue>
        <tissue>Embryo</tissue>
        <tissue>Testis</tissue>
    </source>
</reference>
<reference key="3">
    <citation type="journal article" date="2004" name="Genome Res.">
        <title>The status, quality, and expansion of the NIH full-length cDNA project: the Mammalian Gene Collection (MGC).</title>
        <authorList>
            <consortium name="The MGC Project Team"/>
        </authorList>
    </citation>
    <scope>NUCLEOTIDE SEQUENCE [LARGE SCALE MRNA] (ISOFORMS 1 AND 3)</scope>
    <scope>NUCLEOTIDE SEQUENCE [LARGE SCALE MRNA] OF 513-1016 (ISOFORM 2)</scope>
    <source>
        <strain>C57BL/6J</strain>
        <tissue>Egg</tissue>
        <tissue>Mammary tumor</tissue>
    </source>
</reference>
<reference key="4">
    <citation type="journal article" date="2010" name="Cell">
        <title>A tissue-specific atlas of mouse protein phosphorylation and expression.</title>
        <authorList>
            <person name="Huttlin E.L."/>
            <person name="Jedrychowski M.P."/>
            <person name="Elias J.E."/>
            <person name="Goswami T."/>
            <person name="Rad R."/>
            <person name="Beausoleil S.A."/>
            <person name="Villen J."/>
            <person name="Haas W."/>
            <person name="Sowa M.E."/>
            <person name="Gygi S.P."/>
        </authorList>
    </citation>
    <scope>PHOSPHORYLATION [LARGE SCALE ANALYSIS] AT SER-304; SER-305; SER-306; SER-657; SER-659; SER-661; SER-662 AND SER-817</scope>
    <scope>IDENTIFICATION BY MASS SPECTROMETRY [LARGE SCALE ANALYSIS]</scope>
    <source>
        <tissue>Brain</tissue>
        <tissue>Heart</tissue>
        <tissue>Kidney</tissue>
        <tissue>Liver</tissue>
        <tissue>Lung</tissue>
        <tissue>Pancreas</tissue>
        <tissue>Spleen</tissue>
        <tissue>Testis</tissue>
    </source>
</reference>
<reference key="5">
    <citation type="journal article" date="2011" name="Cell Metab.">
        <title>C2 domain-containing phosphoprotein CDP138 regulates GLUT4 insertion into the plasma membrane.</title>
        <authorList>
            <person name="Xie X."/>
            <person name="Gong Z."/>
            <person name="Mansuy-Aubert V."/>
            <person name="Zhou Q.L."/>
            <person name="Tatulian S.A."/>
            <person name="Sehrt D."/>
            <person name="Gnad F."/>
            <person name="Brill L.M."/>
            <person name="Motamedchaboki K."/>
            <person name="Chen Y."/>
            <person name="Czech M.P."/>
            <person name="Mann M."/>
            <person name="Kruger M."/>
            <person name="Jiang Z.Y."/>
        </authorList>
    </citation>
    <scope>FUNCTION</scope>
    <scope>IDENTIFICATION BY MASS SPECTROMETRY</scope>
</reference>
<keyword id="KW-0025">Alternative splicing</keyword>
<keyword id="KW-0106">Calcium</keyword>
<keyword id="KW-1003">Cell membrane</keyword>
<keyword id="KW-0966">Cell projection</keyword>
<keyword id="KW-0963">Cytoplasm</keyword>
<keyword id="KW-0968">Cytoplasmic vesicle</keyword>
<keyword id="KW-0446">Lipid-binding</keyword>
<keyword id="KW-0472">Membrane</keyword>
<keyword id="KW-0479">Metal-binding</keyword>
<keyword id="KW-0597">Phosphoprotein</keyword>
<keyword id="KW-0653">Protein transport</keyword>
<keyword id="KW-1185">Reference proteome</keyword>
<keyword id="KW-0813">Transport</keyword>
<gene>
    <name type="primary">C2cd5</name>
    <name type="synonym">Cdp138</name>
    <name type="synonym">Kiaa0528</name>
</gene>
<feature type="chain" id="PRO_0000247451" description="C2 domain-containing protein 5">
    <location>
        <begin position="1"/>
        <end position="1016"/>
    </location>
</feature>
<feature type="domain" description="C2" evidence="3">
    <location>
        <begin position="1"/>
        <end position="109"/>
    </location>
</feature>
<feature type="region of interest" description="Disordered" evidence="4">
    <location>
        <begin position="265"/>
        <end position="330"/>
    </location>
</feature>
<feature type="region of interest" description="Disordered" evidence="4">
    <location>
        <begin position="636"/>
        <end position="668"/>
    </location>
</feature>
<feature type="compositionally biased region" description="Polar residues" evidence="4">
    <location>
        <begin position="274"/>
        <end position="289"/>
    </location>
</feature>
<feature type="compositionally biased region" description="Low complexity" evidence="4">
    <location>
        <begin position="290"/>
        <end position="318"/>
    </location>
</feature>
<feature type="compositionally biased region" description="Gly residues" evidence="4">
    <location>
        <begin position="319"/>
        <end position="328"/>
    </location>
</feature>
<feature type="binding site" evidence="3">
    <location>
        <position position="19"/>
    </location>
    <ligand>
        <name>Ca(2+)</name>
        <dbReference type="ChEBI" id="CHEBI:29108"/>
        <label>1</label>
    </ligand>
</feature>
<feature type="binding site" evidence="3">
    <location>
        <position position="19"/>
    </location>
    <ligand>
        <name>Ca(2+)</name>
        <dbReference type="ChEBI" id="CHEBI:29108"/>
        <label>2</label>
    </ligand>
</feature>
<feature type="binding site" evidence="3">
    <location>
        <position position="26"/>
    </location>
    <ligand>
        <name>Ca(2+)</name>
        <dbReference type="ChEBI" id="CHEBI:29108"/>
        <label>1</label>
    </ligand>
</feature>
<feature type="binding site" evidence="3">
    <location>
        <position position="76"/>
    </location>
    <ligand>
        <name>Ca(2+)</name>
        <dbReference type="ChEBI" id="CHEBI:29108"/>
        <label>1</label>
    </ligand>
</feature>
<feature type="binding site" evidence="3">
    <location>
        <position position="76"/>
    </location>
    <ligand>
        <name>Ca(2+)</name>
        <dbReference type="ChEBI" id="CHEBI:29108"/>
        <label>2</label>
    </ligand>
</feature>
<feature type="binding site" evidence="3">
    <location>
        <position position="78"/>
    </location>
    <ligand>
        <name>Ca(2+)</name>
        <dbReference type="ChEBI" id="CHEBI:29108"/>
        <label>1</label>
    </ligand>
</feature>
<feature type="binding site" evidence="3">
    <location>
        <position position="78"/>
    </location>
    <ligand>
        <name>Ca(2+)</name>
        <dbReference type="ChEBI" id="CHEBI:29108"/>
        <label>2</label>
    </ligand>
</feature>
<feature type="binding site" evidence="3">
    <location>
        <position position="78"/>
    </location>
    <ligand>
        <name>Ca(2+)</name>
        <dbReference type="ChEBI" id="CHEBI:29108"/>
        <label>3</label>
    </ligand>
</feature>
<feature type="binding site" evidence="3">
    <location>
        <position position="81"/>
    </location>
    <ligand>
        <name>Ca(2+)</name>
        <dbReference type="ChEBI" id="CHEBI:29108"/>
        <label>3</label>
    </ligand>
</feature>
<feature type="binding site" evidence="3">
    <location>
        <position position="84"/>
    </location>
    <ligand>
        <name>Ca(2+)</name>
        <dbReference type="ChEBI" id="CHEBI:29108"/>
        <label>2</label>
    </ligand>
</feature>
<feature type="binding site" evidence="3">
    <location>
        <position position="84"/>
    </location>
    <ligand>
        <name>Ca(2+)</name>
        <dbReference type="ChEBI" id="CHEBI:29108"/>
        <label>3</label>
    </ligand>
</feature>
<feature type="modified residue" description="Phosphoserine; by PKB/AKT2" evidence="2">
    <location>
        <position position="197"/>
    </location>
</feature>
<feature type="modified residue" description="Phosphoserine" evidence="2">
    <location>
        <position position="200"/>
    </location>
</feature>
<feature type="modified residue" description="Phosphoserine" evidence="2">
    <location>
        <position position="260"/>
    </location>
</feature>
<feature type="modified residue" description="Phosphoserine" evidence="2">
    <location>
        <position position="293"/>
    </location>
</feature>
<feature type="modified residue" description="Phosphoserine" evidence="2">
    <location>
        <position position="295"/>
    </location>
</feature>
<feature type="modified residue" description="Phosphoserine" evidence="10">
    <location>
        <position position="304"/>
    </location>
</feature>
<feature type="modified residue" description="Phosphoserine" evidence="10">
    <location>
        <position position="305"/>
    </location>
</feature>
<feature type="modified residue" description="Phosphoserine" evidence="10">
    <location>
        <position position="306"/>
    </location>
</feature>
<feature type="modified residue" description="Phosphothreonine" evidence="2">
    <location>
        <position position="317"/>
    </location>
</feature>
<feature type="modified residue" description="Phosphoserine" evidence="2">
    <location>
        <position position="323"/>
    </location>
</feature>
<feature type="modified residue" description="Phosphothreonine" evidence="2">
    <location>
        <position position="601"/>
    </location>
</feature>
<feature type="modified residue" description="Phosphoserine" evidence="2">
    <location>
        <position position="643"/>
    </location>
</feature>
<feature type="modified residue" description="Phosphoserine" evidence="10">
    <location>
        <position position="657"/>
    </location>
</feature>
<feature type="modified residue" description="Phosphoserine" evidence="10">
    <location>
        <position position="659"/>
    </location>
</feature>
<feature type="modified residue" description="Phosphoserine" evidence="10">
    <location>
        <position position="661"/>
    </location>
</feature>
<feature type="modified residue" description="Phosphoserine" evidence="10">
    <location>
        <position position="662"/>
    </location>
</feature>
<feature type="modified residue" description="Phosphothreonine" evidence="2">
    <location>
        <position position="666"/>
    </location>
</feature>
<feature type="modified residue" description="Phosphoserine" evidence="2">
    <location>
        <position position="671"/>
    </location>
</feature>
<feature type="modified residue" description="Phosphoserine" evidence="10">
    <location>
        <position position="817"/>
    </location>
</feature>
<feature type="modified residue" description="Phosphoserine" evidence="2">
    <location>
        <position position="869"/>
    </location>
</feature>
<feature type="splice variant" id="VSP_019991" description="In isoform 3." evidence="7">
    <location>
        <begin position="1"/>
        <end position="198"/>
    </location>
</feature>
<feature type="splice variant" id="VSP_019992" description="In isoform 2." evidence="6 7 8">
    <original>IPFNEDPNPNTHSSGPSTPLKNQTYSFSPSKSYSRQSSSSDTDLSLTPK</original>
    <variation>SPLVHPPSHGCRSTHNSPIHTATGSRLTQNFSVSVPTLIY</variation>
    <location>
        <begin position="268"/>
        <end position="316"/>
    </location>
</feature>
<feature type="splice variant" id="VSP_019993" description="In isoform 2." evidence="6 7 8">
    <location>
        <begin position="845"/>
        <end position="861"/>
    </location>
</feature>
<feature type="sequence conflict" description="In Ref. 2; BAC26634." evidence="9" ref="2">
    <original>A</original>
    <variation>S</variation>
    <location>
        <position position="11"/>
    </location>
</feature>
<feature type="sequence conflict" description="In Ref. 2; BAC26634." evidence="9" ref="2">
    <original>P</original>
    <variation>T</variation>
    <location>
        <position position="590"/>
    </location>
</feature>
<feature type="sequence conflict" description="In Ref. 1; BAD32244 and 3; AAH27763/AAH49905." evidence="9" ref="1 3">
    <original>T</original>
    <variation>S</variation>
    <location>
        <position position="632"/>
    </location>
</feature>
<feature type="sequence conflict" description="In Ref. 3; AAH53913." evidence="9" ref="3">
    <original>A</original>
    <variation>V</variation>
    <location>
        <position position="793"/>
    </location>
</feature>
<feature type="sequence conflict" description="In Ref. 2; BAB30814." evidence="9" ref="2">
    <original>A</original>
    <variation>T</variation>
    <location>
        <position position="868"/>
    </location>
</feature>
<protein>
    <recommendedName>
        <fullName>C2 domain-containing protein 5</fullName>
    </recommendedName>
    <alternativeName>
        <fullName>138 kDa C2 domain-containing phosphoprotein</fullName>
    </alternativeName>
</protein>
<comment type="function">
    <text evidence="5">Required for insulin-stimulated glucose transport and glucose transporter SLC2A4/GLUT4 translocation from intracellular glucose storage vesicle (GSV) to the plasma membrane (PM) in adipocytes. Binds phospholipid membranes in a calcium-dependent manner and is necessary for the optimal membrane fusion between SLC2A4/GLUT4 GSV and the PM.</text>
</comment>
<comment type="cofactor">
    <cofactor evidence="3">
        <name>Ca(2+)</name>
        <dbReference type="ChEBI" id="CHEBI:29108"/>
    </cofactor>
    <text evidence="3">Binds 3 Ca(2+) ions per C2 domain.</text>
</comment>
<comment type="subcellular location">
    <subcellularLocation>
        <location evidence="1">Cytoplasmic vesicle membrane</location>
    </subcellularLocation>
    <subcellularLocation>
        <location evidence="1">Cytoplasm</location>
        <location evidence="1">Cell cortex</location>
    </subcellularLocation>
    <subcellularLocation>
        <location evidence="1">Cell membrane</location>
    </subcellularLocation>
    <subcellularLocation>
        <location evidence="1">Cell projection</location>
        <location evidence="1">Ruffle</location>
    </subcellularLocation>
    <text evidence="1">Dynamically associated with GLUT4-containing glucose storage vesicles (GSV) and plasma membrane in response to insulin stimulation.</text>
</comment>
<comment type="alternative products">
    <event type="alternative splicing"/>
    <isoform>
        <id>Q7TPS5-1</id>
        <name>1</name>
        <sequence type="displayed"/>
    </isoform>
    <isoform>
        <id>Q7TPS5-2</id>
        <name>2</name>
        <sequence type="described" ref="VSP_019992 VSP_019993"/>
    </isoform>
    <isoform>
        <id>Q7TPS5-3</id>
        <name>3</name>
        <sequence type="described" ref="VSP_019991"/>
    </isoform>
</comment>
<comment type="tissue specificity">
    <text>Expressed in liver, muscle and fat.</text>
</comment>
<comment type="domain">
    <text evidence="1">The C2 domain binds to calcium and membrane lipids.</text>
</comment>
<comment type="PTM">
    <text evidence="1">Phosphorylated on Ser-197 by active myristoylated kinase AKT2; insulin-stimulated phosphorylation by AKT2 regulates SLC2A4/GLUT4 translocation into the plasma membrane.</text>
</comment>
<comment type="sequence caution" evidence="9">
    <conflict type="erroneous initiation">
        <sequence resource="EMBL-CDS" id="BAD32244"/>
    </conflict>
    <text>Extended N-terminus.</text>
</comment>
<accession>Q7TPS5</accession>
<accession>Q3TQY6</accession>
<accession>Q6A052</accession>
<accession>Q80VA1</accession>
<accession>Q8C0U3</accession>
<accession>Q8CID5</accession>
<accession>Q9CS85</accession>
<dbReference type="EMBL" id="AK172966">
    <property type="protein sequence ID" value="BAD32244.1"/>
    <property type="status" value="ALT_INIT"/>
    <property type="molecule type" value="mRNA"/>
</dbReference>
<dbReference type="EMBL" id="AK017577">
    <property type="protein sequence ID" value="BAB30814.1"/>
    <property type="molecule type" value="mRNA"/>
</dbReference>
<dbReference type="EMBL" id="AK029825">
    <property type="protein sequence ID" value="BAC26634.1"/>
    <property type="molecule type" value="mRNA"/>
</dbReference>
<dbReference type="EMBL" id="AK163233">
    <property type="protein sequence ID" value="BAE37246.1"/>
    <property type="molecule type" value="mRNA"/>
</dbReference>
<dbReference type="EMBL" id="BC027763">
    <property type="protein sequence ID" value="AAH27763.1"/>
    <property type="molecule type" value="mRNA"/>
</dbReference>
<dbReference type="EMBL" id="BC049905">
    <property type="protein sequence ID" value="AAH49905.1"/>
    <property type="molecule type" value="mRNA"/>
</dbReference>
<dbReference type="EMBL" id="BC053913">
    <property type="protein sequence ID" value="AAH53913.1"/>
    <property type="molecule type" value="mRNA"/>
</dbReference>
<dbReference type="CCDS" id="CCDS51952.1">
    <molecule id="Q7TPS5-1"/>
</dbReference>
<dbReference type="CCDS" id="CCDS51953.1">
    <molecule id="Q7TPS5-2"/>
</dbReference>
<dbReference type="RefSeq" id="NP_001103158.1">
    <molecule id="Q7TPS5-2"/>
    <property type="nucleotide sequence ID" value="NM_001109688.2"/>
</dbReference>
<dbReference type="RefSeq" id="NP_001273507.1">
    <molecule id="Q7TPS5-3"/>
    <property type="nucleotide sequence ID" value="NM_001286578.1"/>
</dbReference>
<dbReference type="RefSeq" id="NP_083357.2">
    <molecule id="Q7TPS5-1"/>
    <property type="nucleotide sequence ID" value="NM_029081.3"/>
</dbReference>
<dbReference type="RefSeq" id="NP_084173.1">
    <property type="nucleotide sequence ID" value="NM_029897.2"/>
</dbReference>
<dbReference type="SMR" id="Q7TPS5"/>
<dbReference type="BioGRID" id="216985">
    <property type="interactions" value="4"/>
</dbReference>
<dbReference type="FunCoup" id="Q7TPS5">
    <property type="interactions" value="3720"/>
</dbReference>
<dbReference type="STRING" id="10090.ENSMUSP00000145373"/>
<dbReference type="GlyGen" id="Q7TPS5">
    <property type="glycosylation" value="4 sites, 1 O-linked glycan (1 site)"/>
</dbReference>
<dbReference type="iPTMnet" id="Q7TPS5"/>
<dbReference type="PhosphoSitePlus" id="Q7TPS5"/>
<dbReference type="SwissPalm" id="Q7TPS5"/>
<dbReference type="jPOST" id="Q7TPS5"/>
<dbReference type="PaxDb" id="10090-ENSMUSP00000107388"/>
<dbReference type="PeptideAtlas" id="Q7TPS5"/>
<dbReference type="ProteomicsDB" id="265465">
    <molecule id="Q7TPS5-1"/>
</dbReference>
<dbReference type="ProteomicsDB" id="265466">
    <molecule id="Q7TPS5-2"/>
</dbReference>
<dbReference type="ProteomicsDB" id="265467">
    <molecule id="Q7TPS5-3"/>
</dbReference>
<dbReference type="Pumba" id="Q7TPS5"/>
<dbReference type="Antibodypedia" id="24138">
    <property type="antibodies" value="56 antibodies from 18 providers"/>
</dbReference>
<dbReference type="DNASU" id="74741"/>
<dbReference type="Ensembl" id="ENSMUST00000087485.7">
    <molecule id="Q7TPS5-2"/>
    <property type="protein sequence ID" value="ENSMUSP00000084758.5"/>
    <property type="gene ID" value="ENSMUSG00000030279.16"/>
</dbReference>
<dbReference type="Ensembl" id="ENSMUST00000111758.9">
    <molecule id="Q7TPS5-2"/>
    <property type="protein sequence ID" value="ENSMUSP00000107388.4"/>
    <property type="gene ID" value="ENSMUSG00000030279.16"/>
</dbReference>
<dbReference type="Ensembl" id="ENSMUST00000203187.3">
    <molecule id="Q7TPS5-1"/>
    <property type="protein sequence ID" value="ENSMUSP00000145373.2"/>
    <property type="gene ID" value="ENSMUSG00000030279.16"/>
</dbReference>
<dbReference type="GeneID" id="74741"/>
<dbReference type="KEGG" id="mmu:74741"/>
<dbReference type="UCSC" id="uc009epx.3">
    <molecule id="Q7TPS5-2"/>
    <property type="organism name" value="mouse"/>
</dbReference>
<dbReference type="UCSC" id="uc009epy.3">
    <molecule id="Q7TPS5-1"/>
    <property type="organism name" value="mouse"/>
</dbReference>
<dbReference type="AGR" id="MGI:1921991"/>
<dbReference type="CTD" id="9847"/>
<dbReference type="MGI" id="MGI:1921991">
    <property type="gene designation" value="C2cd5"/>
</dbReference>
<dbReference type="VEuPathDB" id="HostDB:ENSMUSG00000030279"/>
<dbReference type="eggNOG" id="KOG1031">
    <property type="taxonomic scope" value="Eukaryota"/>
</dbReference>
<dbReference type="GeneTree" id="ENSGT00390000000212"/>
<dbReference type="InParanoid" id="Q7TPS5"/>
<dbReference type="OrthoDB" id="419768at2759"/>
<dbReference type="PhylomeDB" id="Q7TPS5"/>
<dbReference type="TreeFam" id="TF323431"/>
<dbReference type="BioGRID-ORCS" id="74741">
    <property type="hits" value="6 hits in 77 CRISPR screens"/>
</dbReference>
<dbReference type="ChiTaRS" id="C2cd5">
    <property type="organism name" value="mouse"/>
</dbReference>
<dbReference type="PRO" id="PR:Q7TPS5"/>
<dbReference type="Proteomes" id="UP000000589">
    <property type="component" value="Chromosome 6"/>
</dbReference>
<dbReference type="RNAct" id="Q7TPS5">
    <property type="molecule type" value="protein"/>
</dbReference>
<dbReference type="Bgee" id="ENSMUSG00000030279">
    <property type="expression patterns" value="Expressed in secondary oocyte and 230 other cell types or tissues"/>
</dbReference>
<dbReference type="ExpressionAtlas" id="Q7TPS5">
    <property type="expression patterns" value="baseline and differential"/>
</dbReference>
<dbReference type="GO" id="GO:0005938">
    <property type="term" value="C:cell cortex"/>
    <property type="evidence" value="ECO:0000250"/>
    <property type="project" value="UniProtKB"/>
</dbReference>
<dbReference type="GO" id="GO:0030659">
    <property type="term" value="C:cytoplasmic vesicle membrane"/>
    <property type="evidence" value="ECO:0000250"/>
    <property type="project" value="UniProtKB"/>
</dbReference>
<dbReference type="GO" id="GO:0005886">
    <property type="term" value="C:plasma membrane"/>
    <property type="evidence" value="ECO:0000314"/>
    <property type="project" value="MGI"/>
</dbReference>
<dbReference type="GO" id="GO:0032587">
    <property type="term" value="C:ruffle membrane"/>
    <property type="evidence" value="ECO:0000250"/>
    <property type="project" value="UniProtKB"/>
</dbReference>
<dbReference type="GO" id="GO:0005509">
    <property type="term" value="F:calcium ion binding"/>
    <property type="evidence" value="ECO:0000314"/>
    <property type="project" value="MGI"/>
</dbReference>
<dbReference type="GO" id="GO:0005544">
    <property type="term" value="F:calcium-dependent phospholipid binding"/>
    <property type="evidence" value="ECO:0000250"/>
    <property type="project" value="UniProtKB"/>
</dbReference>
<dbReference type="GO" id="GO:0008286">
    <property type="term" value="P:insulin receptor signaling pathway"/>
    <property type="evidence" value="ECO:0000315"/>
    <property type="project" value="UniProtKB"/>
</dbReference>
<dbReference type="GO" id="GO:0065002">
    <property type="term" value="P:intracellular protein transmembrane transport"/>
    <property type="evidence" value="ECO:0000250"/>
    <property type="project" value="UniProtKB"/>
</dbReference>
<dbReference type="GO" id="GO:0046326">
    <property type="term" value="P:positive regulation of D-glucose import"/>
    <property type="evidence" value="ECO:0000315"/>
    <property type="project" value="MGI"/>
</dbReference>
<dbReference type="GO" id="GO:0010828">
    <property type="term" value="P:positive regulation of D-glucose transmembrane transport"/>
    <property type="evidence" value="ECO:0000315"/>
    <property type="project" value="UniProtKB"/>
</dbReference>
<dbReference type="GO" id="GO:0090314">
    <property type="term" value="P:positive regulation of protein targeting to membrane"/>
    <property type="evidence" value="ECO:0000250"/>
    <property type="project" value="UniProtKB"/>
</dbReference>
<dbReference type="GO" id="GO:0031340">
    <property type="term" value="P:positive regulation of vesicle fusion"/>
    <property type="evidence" value="ECO:0000315"/>
    <property type="project" value="UniProtKB"/>
</dbReference>
<dbReference type="GO" id="GO:0072659">
    <property type="term" value="P:protein localization to plasma membrane"/>
    <property type="evidence" value="ECO:0000315"/>
    <property type="project" value="MGI"/>
</dbReference>
<dbReference type="GO" id="GO:0006906">
    <property type="term" value="P:vesicle fusion"/>
    <property type="evidence" value="ECO:0000315"/>
    <property type="project" value="MGI"/>
</dbReference>
<dbReference type="CDD" id="cd08688">
    <property type="entry name" value="C2_KIAA0528-like"/>
    <property type="match status" value="1"/>
</dbReference>
<dbReference type="FunFam" id="2.60.40.150:FF:000020">
    <property type="entry name" value="C2 calcium dependent domain containing 5"/>
    <property type="match status" value="1"/>
</dbReference>
<dbReference type="Gene3D" id="2.60.40.150">
    <property type="entry name" value="C2 domain"/>
    <property type="match status" value="1"/>
</dbReference>
<dbReference type="InterPro" id="IPR037785">
    <property type="entry name" value="C2_C2CD5"/>
</dbReference>
<dbReference type="InterPro" id="IPR000008">
    <property type="entry name" value="C2_dom"/>
</dbReference>
<dbReference type="InterPro" id="IPR035892">
    <property type="entry name" value="C2_domain_sf"/>
</dbReference>
<dbReference type="InterPro" id="IPR038983">
    <property type="entry name" value="C2CD5"/>
</dbReference>
<dbReference type="InterPro" id="IPR056430">
    <property type="entry name" value="C2CD5_YbjQ-like_dom"/>
</dbReference>
<dbReference type="InterPro" id="IPR056431">
    <property type="entry name" value="C2CD5_YbjQ-rel_dom"/>
</dbReference>
<dbReference type="PANTHER" id="PTHR37412">
    <property type="entry name" value="C2 DOMAIN-CONTAINING PROTEIN 5"/>
    <property type="match status" value="1"/>
</dbReference>
<dbReference type="PANTHER" id="PTHR37412:SF2">
    <property type="entry name" value="C2 DOMAIN-CONTAINING PROTEIN 5"/>
    <property type="match status" value="1"/>
</dbReference>
<dbReference type="Pfam" id="PF00168">
    <property type="entry name" value="C2"/>
    <property type="match status" value="1"/>
</dbReference>
<dbReference type="Pfam" id="PF23025">
    <property type="entry name" value="YbjQ_2"/>
    <property type="match status" value="4"/>
</dbReference>
<dbReference type="Pfam" id="PF23028">
    <property type="entry name" value="YbjQ_3"/>
    <property type="match status" value="1"/>
</dbReference>
<dbReference type="SMART" id="SM00239">
    <property type="entry name" value="C2"/>
    <property type="match status" value="1"/>
</dbReference>
<dbReference type="SUPFAM" id="SSF49562">
    <property type="entry name" value="C2 domain (Calcium/lipid-binding domain, CaLB)"/>
    <property type="match status" value="1"/>
</dbReference>
<dbReference type="PROSITE" id="PS50004">
    <property type="entry name" value="C2"/>
    <property type="match status" value="1"/>
</dbReference>